<accession>P0A080</accession>
<accession>A7X411</accession>
<accession>Q9KWL1</accession>
<feature type="chain" id="PRO_0000148960" description="Methionine aminopeptidase">
    <location>
        <begin position="1"/>
        <end position="252"/>
    </location>
</feature>
<feature type="binding site" evidence="1">
    <location>
        <position position="76"/>
    </location>
    <ligand>
        <name>substrate</name>
    </ligand>
</feature>
<feature type="binding site" evidence="1">
    <location>
        <position position="93"/>
    </location>
    <ligand>
        <name>a divalent metal cation</name>
        <dbReference type="ChEBI" id="CHEBI:60240"/>
        <label>1</label>
    </ligand>
</feature>
<feature type="binding site" evidence="1">
    <location>
        <position position="104"/>
    </location>
    <ligand>
        <name>a divalent metal cation</name>
        <dbReference type="ChEBI" id="CHEBI:60240"/>
        <label>1</label>
    </ligand>
</feature>
<feature type="binding site" evidence="1">
    <location>
        <position position="104"/>
    </location>
    <ligand>
        <name>a divalent metal cation</name>
        <dbReference type="ChEBI" id="CHEBI:60240"/>
        <label>2</label>
        <note>catalytic</note>
    </ligand>
</feature>
<feature type="binding site" evidence="1">
    <location>
        <position position="168"/>
    </location>
    <ligand>
        <name>a divalent metal cation</name>
        <dbReference type="ChEBI" id="CHEBI:60240"/>
        <label>2</label>
        <note>catalytic</note>
    </ligand>
</feature>
<feature type="binding site" evidence="1">
    <location>
        <position position="175"/>
    </location>
    <ligand>
        <name>substrate</name>
    </ligand>
</feature>
<feature type="binding site" evidence="1">
    <location>
        <position position="202"/>
    </location>
    <ligand>
        <name>a divalent metal cation</name>
        <dbReference type="ChEBI" id="CHEBI:60240"/>
        <label>2</label>
        <note>catalytic</note>
    </ligand>
</feature>
<feature type="binding site" evidence="1">
    <location>
        <position position="233"/>
    </location>
    <ligand>
        <name>a divalent metal cation</name>
        <dbReference type="ChEBI" id="CHEBI:60240"/>
        <label>1</label>
    </ligand>
</feature>
<feature type="binding site" evidence="1">
    <location>
        <position position="233"/>
    </location>
    <ligand>
        <name>a divalent metal cation</name>
        <dbReference type="ChEBI" id="CHEBI:60240"/>
        <label>2</label>
        <note>catalytic</note>
    </ligand>
</feature>
<gene>
    <name evidence="1" type="primary">map</name>
    <name type="ordered locus">SAHV_1873</name>
</gene>
<proteinExistence type="inferred from homology"/>
<name>MAP1_STAA1</name>
<dbReference type="EC" id="3.4.11.18" evidence="1"/>
<dbReference type="EMBL" id="AB035448">
    <property type="protein sequence ID" value="BAB03321.1"/>
    <property type="molecule type" value="Genomic_DNA"/>
</dbReference>
<dbReference type="EMBL" id="AP009324">
    <property type="protein sequence ID" value="BAF78756.1"/>
    <property type="molecule type" value="Genomic_DNA"/>
</dbReference>
<dbReference type="RefSeq" id="WP_000636142.1">
    <property type="nucleotide sequence ID" value="NC_009782.1"/>
</dbReference>
<dbReference type="SMR" id="P0A080"/>
<dbReference type="MEROPS" id="M24.036"/>
<dbReference type="KEGG" id="saw:SAHV_1873"/>
<dbReference type="HOGENOM" id="CLU_015857_0_2_9"/>
<dbReference type="BRENDA" id="3.4.11.18">
    <property type="organism ID" value="3352"/>
</dbReference>
<dbReference type="GO" id="GO:0004239">
    <property type="term" value="F:initiator methionyl aminopeptidase activity"/>
    <property type="evidence" value="ECO:0007669"/>
    <property type="project" value="UniProtKB-UniRule"/>
</dbReference>
<dbReference type="GO" id="GO:0046872">
    <property type="term" value="F:metal ion binding"/>
    <property type="evidence" value="ECO:0007669"/>
    <property type="project" value="UniProtKB-UniRule"/>
</dbReference>
<dbReference type="GO" id="GO:0070006">
    <property type="term" value="F:metalloaminopeptidase activity"/>
    <property type="evidence" value="ECO:0007669"/>
    <property type="project" value="UniProtKB-UniRule"/>
</dbReference>
<dbReference type="GO" id="GO:0006508">
    <property type="term" value="P:proteolysis"/>
    <property type="evidence" value="ECO:0007669"/>
    <property type="project" value="UniProtKB-KW"/>
</dbReference>
<dbReference type="CDD" id="cd01086">
    <property type="entry name" value="MetAP1"/>
    <property type="match status" value="1"/>
</dbReference>
<dbReference type="Gene3D" id="3.90.230.10">
    <property type="entry name" value="Creatinase/methionine aminopeptidase superfamily"/>
    <property type="match status" value="1"/>
</dbReference>
<dbReference type="HAMAP" id="MF_01974">
    <property type="entry name" value="MetAP_1"/>
    <property type="match status" value="1"/>
</dbReference>
<dbReference type="InterPro" id="IPR036005">
    <property type="entry name" value="Creatinase/aminopeptidase-like"/>
</dbReference>
<dbReference type="InterPro" id="IPR000994">
    <property type="entry name" value="Pept_M24"/>
</dbReference>
<dbReference type="InterPro" id="IPR001714">
    <property type="entry name" value="Pept_M24_MAP"/>
</dbReference>
<dbReference type="InterPro" id="IPR002467">
    <property type="entry name" value="Pept_M24A_MAP1"/>
</dbReference>
<dbReference type="NCBIfam" id="TIGR00500">
    <property type="entry name" value="met_pdase_I"/>
    <property type="match status" value="1"/>
</dbReference>
<dbReference type="PANTHER" id="PTHR43330">
    <property type="entry name" value="METHIONINE AMINOPEPTIDASE"/>
    <property type="match status" value="1"/>
</dbReference>
<dbReference type="PANTHER" id="PTHR43330:SF13">
    <property type="entry name" value="METHIONINE AMINOPEPTIDASE 2"/>
    <property type="match status" value="1"/>
</dbReference>
<dbReference type="Pfam" id="PF00557">
    <property type="entry name" value="Peptidase_M24"/>
    <property type="match status" value="1"/>
</dbReference>
<dbReference type="PRINTS" id="PR00599">
    <property type="entry name" value="MAPEPTIDASE"/>
</dbReference>
<dbReference type="SUPFAM" id="SSF55920">
    <property type="entry name" value="Creatinase/aminopeptidase"/>
    <property type="match status" value="1"/>
</dbReference>
<protein>
    <recommendedName>
        <fullName evidence="1">Methionine aminopeptidase</fullName>
        <shortName evidence="1">MAP</shortName>
        <shortName evidence="1">MetAP</shortName>
        <ecNumber evidence="1">3.4.11.18</ecNumber>
    </recommendedName>
    <alternativeName>
        <fullName evidence="1">Peptidase M</fullName>
    </alternativeName>
</protein>
<organism>
    <name type="scientific">Staphylococcus aureus (strain Mu3 / ATCC 700698)</name>
    <dbReference type="NCBI Taxonomy" id="418127"/>
    <lineage>
        <taxon>Bacteria</taxon>
        <taxon>Bacillati</taxon>
        <taxon>Bacillota</taxon>
        <taxon>Bacilli</taxon>
        <taxon>Bacillales</taxon>
        <taxon>Staphylococcaceae</taxon>
        <taxon>Staphylococcus</taxon>
    </lineage>
</organism>
<reference key="1">
    <citation type="journal article" date="2000" name="Biochem. Biophys. Res. Commun.">
        <title>Identification of the up- and down-regulated genes in vancomycin-resistant Staphylococcus aureus strains Mu3 and Mu50 by cDNA differential hybridization method.</title>
        <authorList>
            <person name="Kuroda M."/>
            <person name="Kuwahara-Arai K."/>
            <person name="Hiramatsu K."/>
        </authorList>
    </citation>
    <scope>NUCLEOTIDE SEQUENCE [GENOMIC DNA]</scope>
</reference>
<reference key="2">
    <citation type="journal article" date="2008" name="Antimicrob. Agents Chemother.">
        <title>Mutated response regulator graR is responsible for phenotypic conversion of Staphylococcus aureus from heterogeneous vancomycin-intermediate resistance to vancomycin-intermediate resistance.</title>
        <authorList>
            <person name="Neoh H.-M."/>
            <person name="Cui L."/>
            <person name="Yuzawa H."/>
            <person name="Takeuchi F."/>
            <person name="Matsuo M."/>
            <person name="Hiramatsu K."/>
        </authorList>
    </citation>
    <scope>NUCLEOTIDE SEQUENCE [LARGE SCALE GENOMIC DNA]</scope>
    <source>
        <strain>Mu3 / ATCC 700698</strain>
    </source>
</reference>
<evidence type="ECO:0000255" key="1">
    <source>
        <dbReference type="HAMAP-Rule" id="MF_01974"/>
    </source>
</evidence>
<comment type="function">
    <text evidence="1">Removes the N-terminal methionine from nascent proteins. The N-terminal methionine is often cleaved when the second residue in the primary sequence is small and uncharged (Met-Ala-, Cys, Gly, Pro, Ser, Thr, or Val). Requires deformylation of the N(alpha)-formylated initiator methionine before it can be hydrolyzed.</text>
</comment>
<comment type="catalytic activity">
    <reaction evidence="1">
        <text>Release of N-terminal amino acids, preferentially methionine, from peptides and arylamides.</text>
        <dbReference type="EC" id="3.4.11.18"/>
    </reaction>
</comment>
<comment type="cofactor">
    <cofactor evidence="1">
        <name>Co(2+)</name>
        <dbReference type="ChEBI" id="CHEBI:48828"/>
    </cofactor>
    <cofactor evidence="1">
        <name>Zn(2+)</name>
        <dbReference type="ChEBI" id="CHEBI:29105"/>
    </cofactor>
    <cofactor evidence="1">
        <name>Mn(2+)</name>
        <dbReference type="ChEBI" id="CHEBI:29035"/>
    </cofactor>
    <cofactor evidence="1">
        <name>Fe(2+)</name>
        <dbReference type="ChEBI" id="CHEBI:29033"/>
    </cofactor>
    <text evidence="1">Binds 2 divalent metal cations per subunit. Has a high-affinity and a low affinity metal-binding site. The true nature of the physiological cofactor is under debate. The enzyme is active with cobalt, zinc, manganese or divalent iron ions. Most likely, methionine aminopeptidases function as mononuclear Fe(2+)-metalloproteases under physiological conditions, and the catalytically relevant metal-binding site has been assigned to the histidine-containing high-affinity site.</text>
</comment>
<comment type="subunit">
    <text evidence="1">Monomer.</text>
</comment>
<comment type="similarity">
    <text evidence="1">Belongs to the peptidase M24A family. Methionine aminopeptidase type 1 subfamily.</text>
</comment>
<sequence length="252" mass="27502">MIVKTEEELQALKEIGYICAKVRNTMQAATKPGITTKELDNIAKELFEEYGAISAPIHDENFPGQTCISVNEEVAHGIPSKRVIREGDLVNIDVSALKNGYYADTGISFVVGESDDPMKQKVCDVATMAFENAIAKVKPGTKLSNIGKAVHNTARQNDLKVIKNLTGHGVGLSLHEAPAHVLNYFDPKDKTLLTEGMVLAIEPFISSNASFVTEGKNEWAFETSDKSFVAQIEHTVIVTKDGPILTTKIEEE</sequence>
<keyword id="KW-0031">Aminopeptidase</keyword>
<keyword id="KW-0378">Hydrolase</keyword>
<keyword id="KW-0479">Metal-binding</keyword>
<keyword id="KW-0645">Protease</keyword>